<proteinExistence type="inferred from homology"/>
<sequence length="146" mass="15421">MKLHELKAAEGSRKVRNRVGRGTSSGNGKTSGRGQKGQKARSGGGVRLGFEGGQTPLFRRIPKRGFTNINTKEYALVNLDQLNVFDDGTEVTPAILKDAGIVRAEKSGVKVLGNGELTKKLTVKAAKFSKSAEAAIIAKGGSIEVI</sequence>
<accession>Q48VT0</accession>
<gene>
    <name evidence="1" type="primary">rplO</name>
    <name type="ordered locus">M28_Spy0062</name>
</gene>
<reference key="1">
    <citation type="journal article" date="2005" name="J. Infect. Dis.">
        <title>Genome sequence of a serotype M28 strain of group A Streptococcus: potential new insights into puerperal sepsis and bacterial disease specificity.</title>
        <authorList>
            <person name="Green N.M."/>
            <person name="Zhang S."/>
            <person name="Porcella S.F."/>
            <person name="Nagiec M.J."/>
            <person name="Barbian K.D."/>
            <person name="Beres S.B."/>
            <person name="Lefebvre R.B."/>
            <person name="Musser J.M."/>
        </authorList>
    </citation>
    <scope>NUCLEOTIDE SEQUENCE [LARGE SCALE GENOMIC DNA]</scope>
    <source>
        <strain>MGAS6180</strain>
    </source>
</reference>
<keyword id="KW-0687">Ribonucleoprotein</keyword>
<keyword id="KW-0689">Ribosomal protein</keyword>
<keyword id="KW-0694">RNA-binding</keyword>
<keyword id="KW-0699">rRNA-binding</keyword>
<comment type="function">
    <text evidence="1">Binds to the 23S rRNA.</text>
</comment>
<comment type="subunit">
    <text evidence="1">Part of the 50S ribosomal subunit.</text>
</comment>
<comment type="similarity">
    <text evidence="1">Belongs to the universal ribosomal protein uL15 family.</text>
</comment>
<name>RL15_STRPM</name>
<dbReference type="EMBL" id="CP000056">
    <property type="protein sequence ID" value="AAX71176.1"/>
    <property type="molecule type" value="Genomic_DNA"/>
</dbReference>
<dbReference type="RefSeq" id="WP_002986622.1">
    <property type="nucleotide sequence ID" value="NC_007296.2"/>
</dbReference>
<dbReference type="SMR" id="Q48VT0"/>
<dbReference type="GeneID" id="69900045"/>
<dbReference type="KEGG" id="spb:M28_Spy0062"/>
<dbReference type="HOGENOM" id="CLU_055188_4_2_9"/>
<dbReference type="GO" id="GO:0022625">
    <property type="term" value="C:cytosolic large ribosomal subunit"/>
    <property type="evidence" value="ECO:0007669"/>
    <property type="project" value="TreeGrafter"/>
</dbReference>
<dbReference type="GO" id="GO:0019843">
    <property type="term" value="F:rRNA binding"/>
    <property type="evidence" value="ECO:0007669"/>
    <property type="project" value="UniProtKB-UniRule"/>
</dbReference>
<dbReference type="GO" id="GO:0003735">
    <property type="term" value="F:structural constituent of ribosome"/>
    <property type="evidence" value="ECO:0007669"/>
    <property type="project" value="InterPro"/>
</dbReference>
<dbReference type="GO" id="GO:0006412">
    <property type="term" value="P:translation"/>
    <property type="evidence" value="ECO:0007669"/>
    <property type="project" value="UniProtKB-UniRule"/>
</dbReference>
<dbReference type="Gene3D" id="3.100.10.10">
    <property type="match status" value="1"/>
</dbReference>
<dbReference type="HAMAP" id="MF_01341">
    <property type="entry name" value="Ribosomal_uL15"/>
    <property type="match status" value="1"/>
</dbReference>
<dbReference type="InterPro" id="IPR030878">
    <property type="entry name" value="Ribosomal_uL15"/>
</dbReference>
<dbReference type="InterPro" id="IPR021131">
    <property type="entry name" value="Ribosomal_uL15/eL18"/>
</dbReference>
<dbReference type="InterPro" id="IPR036227">
    <property type="entry name" value="Ribosomal_uL15/eL18_sf"/>
</dbReference>
<dbReference type="InterPro" id="IPR005749">
    <property type="entry name" value="Ribosomal_uL15_bac-type"/>
</dbReference>
<dbReference type="InterPro" id="IPR001196">
    <property type="entry name" value="Ribosomal_uL15_CS"/>
</dbReference>
<dbReference type="NCBIfam" id="TIGR01071">
    <property type="entry name" value="rplO_bact"/>
    <property type="match status" value="1"/>
</dbReference>
<dbReference type="PANTHER" id="PTHR12934">
    <property type="entry name" value="50S RIBOSOMAL PROTEIN L15"/>
    <property type="match status" value="1"/>
</dbReference>
<dbReference type="PANTHER" id="PTHR12934:SF11">
    <property type="entry name" value="LARGE RIBOSOMAL SUBUNIT PROTEIN UL15M"/>
    <property type="match status" value="1"/>
</dbReference>
<dbReference type="Pfam" id="PF00828">
    <property type="entry name" value="Ribosomal_L27A"/>
    <property type="match status" value="1"/>
</dbReference>
<dbReference type="SUPFAM" id="SSF52080">
    <property type="entry name" value="Ribosomal proteins L15p and L18e"/>
    <property type="match status" value="1"/>
</dbReference>
<dbReference type="PROSITE" id="PS00475">
    <property type="entry name" value="RIBOSOMAL_L15"/>
    <property type="match status" value="1"/>
</dbReference>
<organism>
    <name type="scientific">Streptococcus pyogenes serotype M28 (strain MGAS6180)</name>
    <dbReference type="NCBI Taxonomy" id="319701"/>
    <lineage>
        <taxon>Bacteria</taxon>
        <taxon>Bacillati</taxon>
        <taxon>Bacillota</taxon>
        <taxon>Bacilli</taxon>
        <taxon>Lactobacillales</taxon>
        <taxon>Streptococcaceae</taxon>
        <taxon>Streptococcus</taxon>
    </lineage>
</organism>
<feature type="chain" id="PRO_0000104826" description="Large ribosomal subunit protein uL15">
    <location>
        <begin position="1"/>
        <end position="146"/>
    </location>
</feature>
<feature type="region of interest" description="Disordered" evidence="2">
    <location>
        <begin position="1"/>
        <end position="51"/>
    </location>
</feature>
<feature type="compositionally biased region" description="Basic and acidic residues" evidence="2">
    <location>
        <begin position="1"/>
        <end position="13"/>
    </location>
</feature>
<feature type="compositionally biased region" description="Gly residues" evidence="2">
    <location>
        <begin position="23"/>
        <end position="35"/>
    </location>
</feature>
<feature type="compositionally biased region" description="Gly residues" evidence="2">
    <location>
        <begin position="42"/>
        <end position="51"/>
    </location>
</feature>
<evidence type="ECO:0000255" key="1">
    <source>
        <dbReference type="HAMAP-Rule" id="MF_01341"/>
    </source>
</evidence>
<evidence type="ECO:0000256" key="2">
    <source>
        <dbReference type="SAM" id="MobiDB-lite"/>
    </source>
</evidence>
<evidence type="ECO:0000305" key="3"/>
<protein>
    <recommendedName>
        <fullName evidence="1">Large ribosomal subunit protein uL15</fullName>
    </recommendedName>
    <alternativeName>
        <fullName evidence="3">50S ribosomal protein L15</fullName>
    </alternativeName>
</protein>